<name>DUT_SHEB8</name>
<organism>
    <name type="scientific">Shewanella baltica (strain OS185)</name>
    <dbReference type="NCBI Taxonomy" id="402882"/>
    <lineage>
        <taxon>Bacteria</taxon>
        <taxon>Pseudomonadati</taxon>
        <taxon>Pseudomonadota</taxon>
        <taxon>Gammaproteobacteria</taxon>
        <taxon>Alteromonadales</taxon>
        <taxon>Shewanellaceae</taxon>
        <taxon>Shewanella</taxon>
    </lineage>
</organism>
<reference key="1">
    <citation type="submission" date="2007-07" db="EMBL/GenBank/DDBJ databases">
        <title>Complete sequence of chromosome of Shewanella baltica OS185.</title>
        <authorList>
            <consortium name="US DOE Joint Genome Institute"/>
            <person name="Copeland A."/>
            <person name="Lucas S."/>
            <person name="Lapidus A."/>
            <person name="Barry K."/>
            <person name="Glavina del Rio T."/>
            <person name="Dalin E."/>
            <person name="Tice H."/>
            <person name="Pitluck S."/>
            <person name="Sims D."/>
            <person name="Brettin T."/>
            <person name="Bruce D."/>
            <person name="Detter J.C."/>
            <person name="Han C."/>
            <person name="Schmutz J."/>
            <person name="Larimer F."/>
            <person name="Land M."/>
            <person name="Hauser L."/>
            <person name="Kyrpides N."/>
            <person name="Mikhailova N."/>
            <person name="Brettar I."/>
            <person name="Rodrigues J."/>
            <person name="Konstantinidis K."/>
            <person name="Tiedje J."/>
            <person name="Richardson P."/>
        </authorList>
    </citation>
    <scope>NUCLEOTIDE SEQUENCE [LARGE SCALE GENOMIC DNA]</scope>
    <source>
        <strain>OS185</strain>
    </source>
</reference>
<dbReference type="EC" id="3.6.1.23" evidence="1"/>
<dbReference type="EMBL" id="CP000753">
    <property type="protein sequence ID" value="ABS06543.1"/>
    <property type="molecule type" value="Genomic_DNA"/>
</dbReference>
<dbReference type="RefSeq" id="WP_006086674.1">
    <property type="nucleotide sequence ID" value="NC_009665.1"/>
</dbReference>
<dbReference type="SMR" id="A6WIA4"/>
<dbReference type="GeneID" id="11770725"/>
<dbReference type="KEGG" id="sbm:Shew185_0374"/>
<dbReference type="HOGENOM" id="CLU_068508_1_1_6"/>
<dbReference type="UniPathway" id="UPA00610">
    <property type="reaction ID" value="UER00666"/>
</dbReference>
<dbReference type="GO" id="GO:0004170">
    <property type="term" value="F:dUTP diphosphatase activity"/>
    <property type="evidence" value="ECO:0007669"/>
    <property type="project" value="UniProtKB-UniRule"/>
</dbReference>
<dbReference type="GO" id="GO:0000287">
    <property type="term" value="F:magnesium ion binding"/>
    <property type="evidence" value="ECO:0007669"/>
    <property type="project" value="UniProtKB-UniRule"/>
</dbReference>
<dbReference type="GO" id="GO:0006226">
    <property type="term" value="P:dUMP biosynthetic process"/>
    <property type="evidence" value="ECO:0007669"/>
    <property type="project" value="UniProtKB-UniRule"/>
</dbReference>
<dbReference type="GO" id="GO:0046081">
    <property type="term" value="P:dUTP catabolic process"/>
    <property type="evidence" value="ECO:0007669"/>
    <property type="project" value="InterPro"/>
</dbReference>
<dbReference type="CDD" id="cd07557">
    <property type="entry name" value="trimeric_dUTPase"/>
    <property type="match status" value="1"/>
</dbReference>
<dbReference type="FunFam" id="2.70.40.10:FF:000002">
    <property type="entry name" value="dUTP diphosphatase"/>
    <property type="match status" value="1"/>
</dbReference>
<dbReference type="Gene3D" id="2.70.40.10">
    <property type="match status" value="1"/>
</dbReference>
<dbReference type="HAMAP" id="MF_00116">
    <property type="entry name" value="dUTPase_bact"/>
    <property type="match status" value="1"/>
</dbReference>
<dbReference type="InterPro" id="IPR008181">
    <property type="entry name" value="dUTPase"/>
</dbReference>
<dbReference type="InterPro" id="IPR029054">
    <property type="entry name" value="dUTPase-like"/>
</dbReference>
<dbReference type="InterPro" id="IPR036157">
    <property type="entry name" value="dUTPase-like_sf"/>
</dbReference>
<dbReference type="InterPro" id="IPR033704">
    <property type="entry name" value="dUTPase_trimeric"/>
</dbReference>
<dbReference type="NCBIfam" id="TIGR00576">
    <property type="entry name" value="dut"/>
    <property type="match status" value="1"/>
</dbReference>
<dbReference type="NCBIfam" id="NF001862">
    <property type="entry name" value="PRK00601.1"/>
    <property type="match status" value="1"/>
</dbReference>
<dbReference type="PANTHER" id="PTHR11241">
    <property type="entry name" value="DEOXYURIDINE 5'-TRIPHOSPHATE NUCLEOTIDOHYDROLASE"/>
    <property type="match status" value="1"/>
</dbReference>
<dbReference type="PANTHER" id="PTHR11241:SF0">
    <property type="entry name" value="DEOXYURIDINE 5'-TRIPHOSPHATE NUCLEOTIDOHYDROLASE"/>
    <property type="match status" value="1"/>
</dbReference>
<dbReference type="Pfam" id="PF00692">
    <property type="entry name" value="dUTPase"/>
    <property type="match status" value="1"/>
</dbReference>
<dbReference type="SUPFAM" id="SSF51283">
    <property type="entry name" value="dUTPase-like"/>
    <property type="match status" value="1"/>
</dbReference>
<gene>
    <name evidence="1" type="primary">dut</name>
    <name type="ordered locus">Shew185_0374</name>
</gene>
<sequence>MKTPIELKILDSRIGSEFPLPAYATPGSAGMDLRAMIDTTLTIAPGETVLIPTGIAIHVADPGLAAVILPRSGLGHKHGIVLGNLVGLIDSDYQGPLMVSCWNRSDSPFALEIGDRLAQLVFVPVVQAQFKLVDEFDSSDRGEGGFGHSGTK</sequence>
<keyword id="KW-0378">Hydrolase</keyword>
<keyword id="KW-0460">Magnesium</keyword>
<keyword id="KW-0479">Metal-binding</keyword>
<keyword id="KW-0546">Nucleotide metabolism</keyword>
<accession>A6WIA4</accession>
<evidence type="ECO:0000255" key="1">
    <source>
        <dbReference type="HAMAP-Rule" id="MF_00116"/>
    </source>
</evidence>
<comment type="function">
    <text evidence="1">This enzyme is involved in nucleotide metabolism: it produces dUMP, the immediate precursor of thymidine nucleotides and it decreases the intracellular concentration of dUTP so that uracil cannot be incorporated into DNA.</text>
</comment>
<comment type="catalytic activity">
    <reaction evidence="1">
        <text>dUTP + H2O = dUMP + diphosphate + H(+)</text>
        <dbReference type="Rhea" id="RHEA:10248"/>
        <dbReference type="ChEBI" id="CHEBI:15377"/>
        <dbReference type="ChEBI" id="CHEBI:15378"/>
        <dbReference type="ChEBI" id="CHEBI:33019"/>
        <dbReference type="ChEBI" id="CHEBI:61555"/>
        <dbReference type="ChEBI" id="CHEBI:246422"/>
        <dbReference type="EC" id="3.6.1.23"/>
    </reaction>
</comment>
<comment type="cofactor">
    <cofactor evidence="1">
        <name>Mg(2+)</name>
        <dbReference type="ChEBI" id="CHEBI:18420"/>
    </cofactor>
</comment>
<comment type="pathway">
    <text evidence="1">Pyrimidine metabolism; dUMP biosynthesis; dUMP from dCTP (dUTP route): step 2/2.</text>
</comment>
<comment type="similarity">
    <text evidence="1">Belongs to the dUTPase family.</text>
</comment>
<proteinExistence type="inferred from homology"/>
<protein>
    <recommendedName>
        <fullName evidence="1">Deoxyuridine 5'-triphosphate nucleotidohydrolase</fullName>
        <shortName evidence="1">dUTPase</shortName>
        <ecNumber evidence="1">3.6.1.23</ecNumber>
    </recommendedName>
    <alternativeName>
        <fullName evidence="1">dUTP pyrophosphatase</fullName>
    </alternativeName>
</protein>
<feature type="chain" id="PRO_1000015513" description="Deoxyuridine 5'-triphosphate nucleotidohydrolase">
    <location>
        <begin position="1"/>
        <end position="152"/>
    </location>
</feature>
<feature type="binding site" evidence="1">
    <location>
        <begin position="71"/>
        <end position="73"/>
    </location>
    <ligand>
        <name>substrate</name>
    </ligand>
</feature>
<feature type="binding site" evidence="1">
    <location>
        <position position="84"/>
    </location>
    <ligand>
        <name>substrate</name>
    </ligand>
</feature>
<feature type="binding site" evidence="1">
    <location>
        <begin position="88"/>
        <end position="90"/>
    </location>
    <ligand>
        <name>substrate</name>
    </ligand>
</feature>
<feature type="binding site" evidence="1">
    <location>
        <position position="98"/>
    </location>
    <ligand>
        <name>substrate</name>
    </ligand>
</feature>